<accession>A9NHF8</accession>
<dbReference type="EMBL" id="CP000896">
    <property type="protein sequence ID" value="ABX81788.1"/>
    <property type="molecule type" value="Genomic_DNA"/>
</dbReference>
<dbReference type="RefSeq" id="WP_012243119.1">
    <property type="nucleotide sequence ID" value="NC_010163.1"/>
</dbReference>
<dbReference type="SMR" id="A9NHF8"/>
<dbReference type="STRING" id="441768.ACL_1189"/>
<dbReference type="GeneID" id="41339328"/>
<dbReference type="KEGG" id="acl:ACL_1189"/>
<dbReference type="eggNOG" id="COG0806">
    <property type="taxonomic scope" value="Bacteria"/>
</dbReference>
<dbReference type="HOGENOM" id="CLU_077636_3_2_14"/>
<dbReference type="OrthoDB" id="9810331at2"/>
<dbReference type="Proteomes" id="UP000008558">
    <property type="component" value="Chromosome"/>
</dbReference>
<dbReference type="GO" id="GO:0005737">
    <property type="term" value="C:cytoplasm"/>
    <property type="evidence" value="ECO:0007669"/>
    <property type="project" value="UniProtKB-SubCell"/>
</dbReference>
<dbReference type="GO" id="GO:0005840">
    <property type="term" value="C:ribosome"/>
    <property type="evidence" value="ECO:0007669"/>
    <property type="project" value="InterPro"/>
</dbReference>
<dbReference type="GO" id="GO:0043022">
    <property type="term" value="F:ribosome binding"/>
    <property type="evidence" value="ECO:0007669"/>
    <property type="project" value="InterPro"/>
</dbReference>
<dbReference type="GO" id="GO:0042274">
    <property type="term" value="P:ribosomal small subunit biogenesis"/>
    <property type="evidence" value="ECO:0007669"/>
    <property type="project" value="UniProtKB-UniRule"/>
</dbReference>
<dbReference type="GO" id="GO:0006364">
    <property type="term" value="P:rRNA processing"/>
    <property type="evidence" value="ECO:0007669"/>
    <property type="project" value="UniProtKB-UniRule"/>
</dbReference>
<dbReference type="Gene3D" id="2.30.30.240">
    <property type="entry name" value="PRC-barrel domain"/>
    <property type="match status" value="1"/>
</dbReference>
<dbReference type="Gene3D" id="2.40.30.60">
    <property type="entry name" value="RimM"/>
    <property type="match status" value="1"/>
</dbReference>
<dbReference type="HAMAP" id="MF_00014">
    <property type="entry name" value="Ribosome_mat_RimM"/>
    <property type="match status" value="1"/>
</dbReference>
<dbReference type="InterPro" id="IPR011033">
    <property type="entry name" value="PRC_barrel-like_sf"/>
</dbReference>
<dbReference type="InterPro" id="IPR056792">
    <property type="entry name" value="PRC_RimM"/>
</dbReference>
<dbReference type="InterPro" id="IPR011961">
    <property type="entry name" value="RimM"/>
</dbReference>
<dbReference type="InterPro" id="IPR002676">
    <property type="entry name" value="RimM_N"/>
</dbReference>
<dbReference type="InterPro" id="IPR036976">
    <property type="entry name" value="RimM_N_sf"/>
</dbReference>
<dbReference type="InterPro" id="IPR009000">
    <property type="entry name" value="Transl_B-barrel_sf"/>
</dbReference>
<dbReference type="NCBIfam" id="TIGR02273">
    <property type="entry name" value="16S_RimM"/>
    <property type="match status" value="1"/>
</dbReference>
<dbReference type="PANTHER" id="PTHR33692">
    <property type="entry name" value="RIBOSOME MATURATION FACTOR RIMM"/>
    <property type="match status" value="1"/>
</dbReference>
<dbReference type="PANTHER" id="PTHR33692:SF1">
    <property type="entry name" value="RIBOSOME MATURATION FACTOR RIMM"/>
    <property type="match status" value="1"/>
</dbReference>
<dbReference type="Pfam" id="PF24986">
    <property type="entry name" value="PRC_RimM"/>
    <property type="match status" value="1"/>
</dbReference>
<dbReference type="Pfam" id="PF01782">
    <property type="entry name" value="RimM"/>
    <property type="match status" value="1"/>
</dbReference>
<dbReference type="SUPFAM" id="SSF50346">
    <property type="entry name" value="PRC-barrel domain"/>
    <property type="match status" value="1"/>
</dbReference>
<dbReference type="SUPFAM" id="SSF50447">
    <property type="entry name" value="Translation proteins"/>
    <property type="match status" value="1"/>
</dbReference>
<comment type="function">
    <text evidence="1">An accessory protein needed during the final step in the assembly of 30S ribosomal subunit, possibly for assembly of the head region. Essential for efficient processing of 16S rRNA. May be needed both before and after RbfA during the maturation of 16S rRNA. It has affinity for free ribosomal 30S subunits but not for 70S ribosomes.</text>
</comment>
<comment type="subunit">
    <text evidence="1">Binds ribosomal protein uS19.</text>
</comment>
<comment type="subcellular location">
    <subcellularLocation>
        <location evidence="1">Cytoplasm</location>
    </subcellularLocation>
</comment>
<comment type="domain">
    <text evidence="1">The PRC barrel domain binds ribosomal protein uS19.</text>
</comment>
<comment type="similarity">
    <text evidence="1">Belongs to the RimM family.</text>
</comment>
<proteinExistence type="inferred from homology"/>
<name>RIMM_ACHLI</name>
<reference key="1">
    <citation type="journal article" date="2011" name="J. Bacteriol.">
        <title>Complete genome and proteome of Acholeplasma laidlawii.</title>
        <authorList>
            <person name="Lazarev V.N."/>
            <person name="Levitskii S.A."/>
            <person name="Basovskii Y.I."/>
            <person name="Chukin M.M."/>
            <person name="Akopian T.A."/>
            <person name="Vereshchagin V.V."/>
            <person name="Kostrjukova E.S."/>
            <person name="Kovaleva G.Y."/>
            <person name="Kazanov M.D."/>
            <person name="Malko D.B."/>
            <person name="Vitreschak A.G."/>
            <person name="Sernova N.V."/>
            <person name="Gelfand M.S."/>
            <person name="Demina I.A."/>
            <person name="Serebryakova M.V."/>
            <person name="Galyamina M.A."/>
            <person name="Vtyurin N.N."/>
            <person name="Rogov S.I."/>
            <person name="Alexeev D.G."/>
            <person name="Ladygina V.G."/>
            <person name="Govorun V.M."/>
        </authorList>
    </citation>
    <scope>NUCLEOTIDE SEQUENCE [LARGE SCALE GENOMIC DNA]</scope>
    <source>
        <strain>PG-8A</strain>
    </source>
</reference>
<keyword id="KW-0143">Chaperone</keyword>
<keyword id="KW-0963">Cytoplasm</keyword>
<keyword id="KW-1185">Reference proteome</keyword>
<keyword id="KW-0690">Ribosome biogenesis</keyword>
<keyword id="KW-0698">rRNA processing</keyword>
<evidence type="ECO:0000255" key="1">
    <source>
        <dbReference type="HAMAP-Rule" id="MF_00014"/>
    </source>
</evidence>
<gene>
    <name evidence="1" type="primary">rimM</name>
    <name type="ordered locus">ACL_1189</name>
</gene>
<sequence length="159" mass="18296">MLYSIGKVVQTHGIKGEVKIKPHTDFDRFVKGFDVIIKDTKYKIQTVREQKDLLLVSFVGYPTLTDVEHLKQQEIYTDEEPLDLESDAFHLPKLIGLKVYDQHNYLIGTVLELVDVPQGYLLRILRDDNGKTVLIPFIDKFIKSVDETSIHIETIEGLI</sequence>
<protein>
    <recommendedName>
        <fullName evidence="1">Ribosome maturation factor RimM</fullName>
    </recommendedName>
</protein>
<feature type="chain" id="PRO_0000351713" description="Ribosome maturation factor RimM">
    <location>
        <begin position="1"/>
        <end position="159"/>
    </location>
</feature>
<feature type="domain" description="PRC barrel" evidence="1">
    <location>
        <begin position="86"/>
        <end position="159"/>
    </location>
</feature>
<organism>
    <name type="scientific">Acholeplasma laidlawii (strain PG-8A)</name>
    <dbReference type="NCBI Taxonomy" id="441768"/>
    <lineage>
        <taxon>Bacteria</taxon>
        <taxon>Bacillati</taxon>
        <taxon>Mycoplasmatota</taxon>
        <taxon>Mollicutes</taxon>
        <taxon>Acholeplasmatales</taxon>
        <taxon>Acholeplasmataceae</taxon>
        <taxon>Acholeplasma</taxon>
    </lineage>
</organism>